<proteinExistence type="inferred from homology"/>
<name>LDH_STRTR</name>
<gene>
    <name evidence="1" type="primary">ldh</name>
</gene>
<accession>Q60009</accession>
<feature type="chain" id="PRO_0000168403" description="L-lactate dehydrogenase">
    <location>
        <begin position="1"/>
        <end position="328"/>
    </location>
</feature>
<feature type="active site" description="Proton acceptor" evidence="1">
    <location>
        <position position="181"/>
    </location>
</feature>
<feature type="binding site" evidence="1">
    <location>
        <position position="18"/>
    </location>
    <ligand>
        <name>NAD(+)</name>
        <dbReference type="ChEBI" id="CHEBI:57540"/>
    </ligand>
</feature>
<feature type="binding site" evidence="1">
    <location>
        <position position="39"/>
    </location>
    <ligand>
        <name>NAD(+)</name>
        <dbReference type="ChEBI" id="CHEBI:57540"/>
    </ligand>
</feature>
<feature type="binding site" evidence="1">
    <location>
        <position position="46"/>
    </location>
    <ligand>
        <name>NAD(+)</name>
        <dbReference type="ChEBI" id="CHEBI:57540"/>
    </ligand>
</feature>
<feature type="binding site" evidence="1">
    <location>
        <position position="71"/>
    </location>
    <ligand>
        <name>NAD(+)</name>
        <dbReference type="ChEBI" id="CHEBI:57540"/>
    </ligand>
</feature>
<feature type="binding site" evidence="1">
    <location>
        <begin position="85"/>
        <end position="86"/>
    </location>
    <ligand>
        <name>NAD(+)</name>
        <dbReference type="ChEBI" id="CHEBI:57540"/>
    </ligand>
</feature>
<feature type="binding site" evidence="1">
    <location>
        <position position="88"/>
    </location>
    <ligand>
        <name>substrate</name>
    </ligand>
</feature>
<feature type="binding site" evidence="1">
    <location>
        <position position="94"/>
    </location>
    <ligand>
        <name>substrate</name>
    </ligand>
</feature>
<feature type="binding site" evidence="1">
    <location>
        <position position="107"/>
    </location>
    <ligand>
        <name>NAD(+)</name>
        <dbReference type="ChEBI" id="CHEBI:57540"/>
    </ligand>
</feature>
<feature type="binding site" evidence="1">
    <location>
        <begin position="124"/>
        <end position="126"/>
    </location>
    <ligand>
        <name>NAD(+)</name>
        <dbReference type="ChEBI" id="CHEBI:57540"/>
    </ligand>
</feature>
<feature type="binding site" evidence="1">
    <location>
        <begin position="126"/>
        <end position="129"/>
    </location>
    <ligand>
        <name>substrate</name>
    </ligand>
</feature>
<feature type="binding site" evidence="1">
    <location>
        <position position="149"/>
    </location>
    <ligand>
        <name>NAD(+)</name>
        <dbReference type="ChEBI" id="CHEBI:57540"/>
    </ligand>
</feature>
<feature type="binding site" evidence="1">
    <location>
        <begin position="154"/>
        <end position="157"/>
    </location>
    <ligand>
        <name>substrate</name>
    </ligand>
</feature>
<feature type="binding site" evidence="1">
    <location>
        <position position="159"/>
    </location>
    <ligand>
        <name>beta-D-fructose 1,6-bisphosphate</name>
        <dbReference type="ChEBI" id="CHEBI:32966"/>
        <note>allosteric activator</note>
    </ligand>
</feature>
<feature type="binding site" evidence="1">
    <location>
        <position position="174"/>
    </location>
    <ligand>
        <name>beta-D-fructose 1,6-bisphosphate</name>
        <dbReference type="ChEBI" id="CHEBI:32966"/>
        <note>allosteric activator</note>
    </ligand>
</feature>
<feature type="binding site" evidence="1">
    <location>
        <position position="235"/>
    </location>
    <ligand>
        <name>substrate</name>
    </ligand>
</feature>
<feature type="modified residue" description="Phosphotyrosine" evidence="1">
    <location>
        <position position="226"/>
    </location>
</feature>
<comment type="function">
    <text evidence="1">Catalyzes the conversion of lactate to pyruvate.</text>
</comment>
<comment type="catalytic activity">
    <reaction evidence="1">
        <text>(S)-lactate + NAD(+) = pyruvate + NADH + H(+)</text>
        <dbReference type="Rhea" id="RHEA:23444"/>
        <dbReference type="ChEBI" id="CHEBI:15361"/>
        <dbReference type="ChEBI" id="CHEBI:15378"/>
        <dbReference type="ChEBI" id="CHEBI:16651"/>
        <dbReference type="ChEBI" id="CHEBI:57540"/>
        <dbReference type="ChEBI" id="CHEBI:57945"/>
        <dbReference type="EC" id="1.1.1.27"/>
    </reaction>
</comment>
<comment type="activity regulation">
    <text evidence="1">Allosterically activated by fructose 1,6-bisphosphate (FBP).</text>
</comment>
<comment type="pathway">
    <text evidence="1">Fermentation; pyruvate fermentation to lactate; (S)-lactate from pyruvate: step 1/1.</text>
</comment>
<comment type="subunit">
    <text evidence="1">Homotetramer.</text>
</comment>
<comment type="subcellular location">
    <subcellularLocation>
        <location evidence="1">Cytoplasm</location>
    </subcellularLocation>
</comment>
<comment type="similarity">
    <text evidence="1 2">Belongs to the LDH/MDH superfamily. LDH family.</text>
</comment>
<sequence>MTATKLHKKVILVGDGAVGSSYAFALVNQGIAQELGIIEIPQLFEKAVGDALDLSHALPFTSPKKIYAAKYEDCADADLVVITAGAPQKPGETRLDLVGKNLAINKSIVTQVVESGFNGIFLVAANPVDVLTYSTWKFSGFPKERVIGSGTSLDSARFRQALAEKLNVDARSVHAYIMGEHGDSEFAVWSHANIAGVNLEEFLKDKENVQEAELVELFEGVRDAAYTIINKKGATYYGIAVALARITKAILDDENAVLPLSVFQEGQYGVNNIFIGQPAIVGAHGIVRPVNIPLNDAEQQKMKASADELQAIIDEAWKNPEFQEASKN</sequence>
<reference key="1">
    <citation type="journal article" date="1994" name="Biosci. Biotechnol. Biochem.">
        <title>Cloning and nucleotide sequencing of L-lactate dehydrogenase gene from Streptococcus thermophilus M-192.</title>
        <authorList>
            <person name="Ito Y."/>
            <person name="Sasaki T."/>
        </authorList>
    </citation>
    <scope>NUCLEOTIDE SEQUENCE [GENOMIC DNA]</scope>
    <source>
        <strain>M-192</strain>
    </source>
</reference>
<dbReference type="EC" id="1.1.1.27" evidence="1"/>
<dbReference type="EMBL" id="D13405">
    <property type="protein sequence ID" value="BAA02669.1"/>
    <property type="molecule type" value="Genomic_DNA"/>
</dbReference>
<dbReference type="PIR" id="JC2312">
    <property type="entry name" value="JC2312"/>
</dbReference>
<dbReference type="RefSeq" id="WP_011227325.1">
    <property type="nucleotide sequence ID" value="NZ_RIJG01000001.1"/>
</dbReference>
<dbReference type="SMR" id="Q60009"/>
<dbReference type="KEGG" id="sths:AVT04_08465"/>
<dbReference type="eggNOG" id="COG0039">
    <property type="taxonomic scope" value="Bacteria"/>
</dbReference>
<dbReference type="UniPathway" id="UPA00554">
    <property type="reaction ID" value="UER00611"/>
</dbReference>
<dbReference type="GO" id="GO:0005737">
    <property type="term" value="C:cytoplasm"/>
    <property type="evidence" value="ECO:0007669"/>
    <property type="project" value="UniProtKB-SubCell"/>
</dbReference>
<dbReference type="GO" id="GO:0004459">
    <property type="term" value="F:L-lactate dehydrogenase activity"/>
    <property type="evidence" value="ECO:0007669"/>
    <property type="project" value="UniProtKB-UniRule"/>
</dbReference>
<dbReference type="GO" id="GO:0006096">
    <property type="term" value="P:glycolytic process"/>
    <property type="evidence" value="ECO:0007669"/>
    <property type="project" value="UniProtKB-UniRule"/>
</dbReference>
<dbReference type="GO" id="GO:0006089">
    <property type="term" value="P:lactate metabolic process"/>
    <property type="evidence" value="ECO:0007669"/>
    <property type="project" value="TreeGrafter"/>
</dbReference>
<dbReference type="CDD" id="cd05291">
    <property type="entry name" value="HicDH_like"/>
    <property type="match status" value="1"/>
</dbReference>
<dbReference type="FunFam" id="3.40.50.720:FF:000018">
    <property type="entry name" value="Malate dehydrogenase"/>
    <property type="match status" value="1"/>
</dbReference>
<dbReference type="Gene3D" id="3.90.110.10">
    <property type="entry name" value="Lactate dehydrogenase/glycoside hydrolase, family 4, C-terminal"/>
    <property type="match status" value="1"/>
</dbReference>
<dbReference type="Gene3D" id="3.40.50.720">
    <property type="entry name" value="NAD(P)-binding Rossmann-like Domain"/>
    <property type="match status" value="1"/>
</dbReference>
<dbReference type="HAMAP" id="MF_00488">
    <property type="entry name" value="Lactate_dehydrog"/>
    <property type="match status" value="1"/>
</dbReference>
<dbReference type="InterPro" id="IPR001557">
    <property type="entry name" value="L-lactate/malate_DH"/>
</dbReference>
<dbReference type="InterPro" id="IPR011304">
    <property type="entry name" value="L-lactate_DH"/>
</dbReference>
<dbReference type="InterPro" id="IPR018177">
    <property type="entry name" value="L-lactate_DH_AS"/>
</dbReference>
<dbReference type="InterPro" id="IPR022383">
    <property type="entry name" value="Lactate/malate_DH_C"/>
</dbReference>
<dbReference type="InterPro" id="IPR001236">
    <property type="entry name" value="Lactate/malate_DH_N"/>
</dbReference>
<dbReference type="InterPro" id="IPR015955">
    <property type="entry name" value="Lactate_DH/Glyco_Ohase_4_C"/>
</dbReference>
<dbReference type="InterPro" id="IPR036291">
    <property type="entry name" value="NAD(P)-bd_dom_sf"/>
</dbReference>
<dbReference type="NCBIfam" id="TIGR01771">
    <property type="entry name" value="L-LDH-NAD"/>
    <property type="match status" value="1"/>
</dbReference>
<dbReference type="NCBIfam" id="NF000824">
    <property type="entry name" value="PRK00066.1"/>
    <property type="match status" value="1"/>
</dbReference>
<dbReference type="PANTHER" id="PTHR43128">
    <property type="entry name" value="L-2-HYDROXYCARBOXYLATE DEHYDROGENASE (NAD(P)(+))"/>
    <property type="match status" value="1"/>
</dbReference>
<dbReference type="PANTHER" id="PTHR43128:SF16">
    <property type="entry name" value="L-LACTATE DEHYDROGENASE"/>
    <property type="match status" value="1"/>
</dbReference>
<dbReference type="Pfam" id="PF02866">
    <property type="entry name" value="Ldh_1_C"/>
    <property type="match status" value="1"/>
</dbReference>
<dbReference type="Pfam" id="PF00056">
    <property type="entry name" value="Ldh_1_N"/>
    <property type="match status" value="1"/>
</dbReference>
<dbReference type="PIRSF" id="PIRSF000102">
    <property type="entry name" value="Lac_mal_DH"/>
    <property type="match status" value="1"/>
</dbReference>
<dbReference type="PRINTS" id="PR00086">
    <property type="entry name" value="LLDHDRGNASE"/>
</dbReference>
<dbReference type="SUPFAM" id="SSF56327">
    <property type="entry name" value="LDH C-terminal domain-like"/>
    <property type="match status" value="1"/>
</dbReference>
<dbReference type="SUPFAM" id="SSF51735">
    <property type="entry name" value="NAD(P)-binding Rossmann-fold domains"/>
    <property type="match status" value="1"/>
</dbReference>
<dbReference type="PROSITE" id="PS00064">
    <property type="entry name" value="L_LDH"/>
    <property type="match status" value="1"/>
</dbReference>
<protein>
    <recommendedName>
        <fullName evidence="1">L-lactate dehydrogenase</fullName>
        <shortName evidence="1">L-LDH</shortName>
        <ecNumber evidence="1">1.1.1.27</ecNumber>
    </recommendedName>
</protein>
<evidence type="ECO:0000255" key="1">
    <source>
        <dbReference type="HAMAP-Rule" id="MF_00488"/>
    </source>
</evidence>
<evidence type="ECO:0000305" key="2"/>
<keyword id="KW-0021">Allosteric enzyme</keyword>
<keyword id="KW-0963">Cytoplasm</keyword>
<keyword id="KW-0520">NAD</keyword>
<keyword id="KW-0560">Oxidoreductase</keyword>
<keyword id="KW-0597">Phosphoprotein</keyword>
<organism>
    <name type="scientific">Streptococcus thermophilus</name>
    <dbReference type="NCBI Taxonomy" id="1308"/>
    <lineage>
        <taxon>Bacteria</taxon>
        <taxon>Bacillati</taxon>
        <taxon>Bacillota</taxon>
        <taxon>Bacilli</taxon>
        <taxon>Lactobacillales</taxon>
        <taxon>Streptococcaceae</taxon>
        <taxon>Streptococcus</taxon>
    </lineage>
</organism>